<keyword id="KW-0067">ATP-binding</keyword>
<keyword id="KW-0150">Chloroplast</keyword>
<keyword id="KW-0547">Nucleotide-binding</keyword>
<keyword id="KW-0934">Plastid</keyword>
<keyword id="KW-0809">Transit peptide</keyword>
<protein>
    <recommendedName>
        <fullName>Ribulose bisphosphate carboxylase/oxygenase activase, chloroplastic</fullName>
        <shortName>RA</shortName>
        <shortName>RuBisCO activase</shortName>
    </recommendedName>
</protein>
<accession>O49074</accession>
<name>RCA_SOLPN</name>
<feature type="transit peptide" description="Chloroplast" evidence="1">
    <location>
        <begin position="1"/>
        <end status="unknown"/>
    </location>
</feature>
<feature type="chain" id="PRO_0000030235" description="Ribulose bisphosphate carboxylase/oxygenase activase, chloroplastic">
    <location>
        <begin status="unknown"/>
        <end position="459"/>
    </location>
</feature>
<feature type="binding site" evidence="1">
    <location>
        <begin position="164"/>
        <end position="171"/>
    </location>
    <ligand>
        <name>ATP</name>
        <dbReference type="ChEBI" id="CHEBI:30616"/>
    </ligand>
</feature>
<comment type="function">
    <text>Activation of RuBisCO (ribulose-1,5-bisphosphate carboxylase/oxygenase; EC 4.1.1.39) involves the ATP-dependent carboxylation of the epsilon-amino group of lysine leading to a carbamate structure.</text>
</comment>
<comment type="subcellular location">
    <subcellularLocation>
        <location>Plastid</location>
        <location>Chloroplast stroma</location>
    </subcellularLocation>
</comment>
<comment type="similarity">
    <text evidence="2">Belongs to the RuBisCO activase family.</text>
</comment>
<sequence length="459" mass="50701">MAASVSTIGAASKAPLSLNNSVAGTSVPSTAFFGKSLKKVYAKGVSSPKVSNRNLRVVAQEVDETKEDRWKGLYDNTSDDQQDIARGKGLVDSLFQAPTGTGTHHAIMNSYEYVSQALKTYQLDNKLDGFYIAPAFMDKLVVHITKNFLTLPNIKVPLILGVWGGKGQGKSFQCELVFRKMGINPIMMSAGELESGNAGEPAKLIRQRYREAAEIIRKGNMCCLFINDLDAGAGRMGGTTQYTVNNQMVNATLMNIADNPTNVQLPGMYNKQENARVPIIVTGNDFSTLYAPLIRDGRMEKFYWAPTREDRIGVCKGIFRTDNVPEEAVVKIVDSFPGQSIDFFGALRARVYDDEVRKWVSGTGIELIGEKLLNSRDGPPTFEQPKMTLEKLLEYGNMLVQEQENVKRVQLAETYLKEAALGDANADAINTGISKNFTNLKSRLNNEEAKKARHVNFQE</sequence>
<organism>
    <name type="scientific">Solanum pennellii</name>
    <name type="common">Tomato</name>
    <name type="synonym">Lycopersicon pennellii</name>
    <dbReference type="NCBI Taxonomy" id="28526"/>
    <lineage>
        <taxon>Eukaryota</taxon>
        <taxon>Viridiplantae</taxon>
        <taxon>Streptophyta</taxon>
        <taxon>Embryophyta</taxon>
        <taxon>Tracheophyta</taxon>
        <taxon>Spermatophyta</taxon>
        <taxon>Magnoliopsida</taxon>
        <taxon>eudicotyledons</taxon>
        <taxon>Gunneridae</taxon>
        <taxon>Pentapetalae</taxon>
        <taxon>asterids</taxon>
        <taxon>lamiids</taxon>
        <taxon>Solanales</taxon>
        <taxon>Solanaceae</taxon>
        <taxon>Solanoideae</taxon>
        <taxon>Solaneae</taxon>
        <taxon>Solanum</taxon>
        <taxon>Solanum subgen. Lycopersicon</taxon>
    </lineage>
</organism>
<evidence type="ECO:0000255" key="1"/>
<evidence type="ECO:0000305" key="2"/>
<dbReference type="EMBL" id="AF037361">
    <property type="protein sequence ID" value="AAC15236.1"/>
    <property type="molecule type" value="mRNA"/>
</dbReference>
<dbReference type="RefSeq" id="NP_001310357.1">
    <property type="nucleotide sequence ID" value="NM_001323428.1"/>
</dbReference>
<dbReference type="SMR" id="O49074"/>
<dbReference type="GeneID" id="107002192"/>
<dbReference type="KEGG" id="spen:107002192"/>
<dbReference type="OrthoDB" id="55474at4069"/>
<dbReference type="Proteomes" id="UP000694930">
    <property type="component" value="Chromosome 10"/>
</dbReference>
<dbReference type="GO" id="GO:0009570">
    <property type="term" value="C:chloroplast stroma"/>
    <property type="evidence" value="ECO:0007669"/>
    <property type="project" value="UniProtKB-SubCell"/>
</dbReference>
<dbReference type="GO" id="GO:0009579">
    <property type="term" value="C:thylakoid"/>
    <property type="evidence" value="ECO:0007669"/>
    <property type="project" value="TreeGrafter"/>
</dbReference>
<dbReference type="GO" id="GO:0005524">
    <property type="term" value="F:ATP binding"/>
    <property type="evidence" value="ECO:0007669"/>
    <property type="project" value="UniProtKB-KW"/>
</dbReference>
<dbReference type="GO" id="GO:0016887">
    <property type="term" value="F:ATP hydrolysis activity"/>
    <property type="evidence" value="ECO:0007669"/>
    <property type="project" value="InterPro"/>
</dbReference>
<dbReference type="GO" id="GO:0046863">
    <property type="term" value="F:ribulose-1,5-bisphosphate carboxylase/oxygenase activator activity"/>
    <property type="evidence" value="ECO:0007669"/>
    <property type="project" value="TreeGrafter"/>
</dbReference>
<dbReference type="FunFam" id="1.10.8.1070:FF:000001">
    <property type="entry name" value="Ribulose bisphosphate carboxylase/oxygenase activase, chloroplastic"/>
    <property type="match status" value="1"/>
</dbReference>
<dbReference type="FunFam" id="3.40.50.300:FF:000258">
    <property type="entry name" value="Ribulose bisphosphate carboxylase/oxygenase activase, chloroplastic"/>
    <property type="match status" value="1"/>
</dbReference>
<dbReference type="Gene3D" id="1.10.8.1070">
    <property type="match status" value="1"/>
</dbReference>
<dbReference type="Gene3D" id="3.40.50.300">
    <property type="entry name" value="P-loop containing nucleotide triphosphate hydrolases"/>
    <property type="match status" value="1"/>
</dbReference>
<dbReference type="InterPro" id="IPR003959">
    <property type="entry name" value="ATPase_AAA_core"/>
</dbReference>
<dbReference type="InterPro" id="IPR027417">
    <property type="entry name" value="P-loop_NTPase"/>
</dbReference>
<dbReference type="InterPro" id="IPR044960">
    <property type="entry name" value="RCA-like"/>
</dbReference>
<dbReference type="InterPro" id="IPR048571">
    <property type="entry name" value="RuBisCO_activase_AAA_helical"/>
</dbReference>
<dbReference type="PANTHER" id="PTHR32429">
    <property type="match status" value="1"/>
</dbReference>
<dbReference type="PANTHER" id="PTHR32429:SF29">
    <property type="entry name" value="RIBULOSE BISPHOSPHATE CARBOXYLASE_OXYGENASE ACTIVASE, CHLOROPLASTIC"/>
    <property type="match status" value="1"/>
</dbReference>
<dbReference type="Pfam" id="PF00004">
    <property type="entry name" value="AAA"/>
    <property type="match status" value="1"/>
</dbReference>
<dbReference type="Pfam" id="PF21228">
    <property type="entry name" value="RuBisCO_activase_AAA_helical"/>
    <property type="match status" value="1"/>
</dbReference>
<dbReference type="SUPFAM" id="SSF52540">
    <property type="entry name" value="P-loop containing nucleoside triphosphate hydrolases"/>
    <property type="match status" value="1"/>
</dbReference>
<proteinExistence type="evidence at transcript level"/>
<reference key="1">
    <citation type="online journal article" date="1998" name="Plant Gene Register">
        <title>A cDNA from tomato (Lycopersicon pennellii) encoding ribulose-1,5-bisphosphate carboxylase/oxygenase activase.</title>
        <authorList>
            <person name="Zhu Y.L."/>
            <person name="Lin K.H."/>
            <person name="Huang Y.H."/>
            <person name="Tauer C.G."/>
            <person name="Martin B.C."/>
        </authorList>
        <locator>PGR98-053</locator>
    </citation>
    <scope>NUCLEOTIDE SEQUENCE [MRNA]</scope>
</reference>